<accession>Q8BGF6</accession>
<accession>Q6AXC7</accession>
<accession>Q8BHP5</accession>
<reference key="1">
    <citation type="journal article" date="2005" name="Science">
        <title>The transcriptional landscape of the mammalian genome.</title>
        <authorList>
            <person name="Carninci P."/>
            <person name="Kasukawa T."/>
            <person name="Katayama S."/>
            <person name="Gough J."/>
            <person name="Frith M.C."/>
            <person name="Maeda N."/>
            <person name="Oyama R."/>
            <person name="Ravasi T."/>
            <person name="Lenhard B."/>
            <person name="Wells C."/>
            <person name="Kodzius R."/>
            <person name="Shimokawa K."/>
            <person name="Bajic V.B."/>
            <person name="Brenner S.E."/>
            <person name="Batalov S."/>
            <person name="Forrest A.R."/>
            <person name="Zavolan M."/>
            <person name="Davis M.J."/>
            <person name="Wilming L.G."/>
            <person name="Aidinis V."/>
            <person name="Allen J.E."/>
            <person name="Ambesi-Impiombato A."/>
            <person name="Apweiler R."/>
            <person name="Aturaliya R.N."/>
            <person name="Bailey T.L."/>
            <person name="Bansal M."/>
            <person name="Baxter L."/>
            <person name="Beisel K.W."/>
            <person name="Bersano T."/>
            <person name="Bono H."/>
            <person name="Chalk A.M."/>
            <person name="Chiu K.P."/>
            <person name="Choudhary V."/>
            <person name="Christoffels A."/>
            <person name="Clutterbuck D.R."/>
            <person name="Crowe M.L."/>
            <person name="Dalla E."/>
            <person name="Dalrymple B.P."/>
            <person name="de Bono B."/>
            <person name="Della Gatta G."/>
            <person name="di Bernardo D."/>
            <person name="Down T."/>
            <person name="Engstrom P."/>
            <person name="Fagiolini M."/>
            <person name="Faulkner G."/>
            <person name="Fletcher C.F."/>
            <person name="Fukushima T."/>
            <person name="Furuno M."/>
            <person name="Futaki S."/>
            <person name="Gariboldi M."/>
            <person name="Georgii-Hemming P."/>
            <person name="Gingeras T.R."/>
            <person name="Gojobori T."/>
            <person name="Green R.E."/>
            <person name="Gustincich S."/>
            <person name="Harbers M."/>
            <person name="Hayashi Y."/>
            <person name="Hensch T.K."/>
            <person name="Hirokawa N."/>
            <person name="Hill D."/>
            <person name="Huminiecki L."/>
            <person name="Iacono M."/>
            <person name="Ikeo K."/>
            <person name="Iwama A."/>
            <person name="Ishikawa T."/>
            <person name="Jakt M."/>
            <person name="Kanapin A."/>
            <person name="Katoh M."/>
            <person name="Kawasawa Y."/>
            <person name="Kelso J."/>
            <person name="Kitamura H."/>
            <person name="Kitano H."/>
            <person name="Kollias G."/>
            <person name="Krishnan S.P."/>
            <person name="Kruger A."/>
            <person name="Kummerfeld S.K."/>
            <person name="Kurochkin I.V."/>
            <person name="Lareau L.F."/>
            <person name="Lazarevic D."/>
            <person name="Lipovich L."/>
            <person name="Liu J."/>
            <person name="Liuni S."/>
            <person name="McWilliam S."/>
            <person name="Madan Babu M."/>
            <person name="Madera M."/>
            <person name="Marchionni L."/>
            <person name="Matsuda H."/>
            <person name="Matsuzawa S."/>
            <person name="Miki H."/>
            <person name="Mignone F."/>
            <person name="Miyake S."/>
            <person name="Morris K."/>
            <person name="Mottagui-Tabar S."/>
            <person name="Mulder N."/>
            <person name="Nakano N."/>
            <person name="Nakauchi H."/>
            <person name="Ng P."/>
            <person name="Nilsson R."/>
            <person name="Nishiguchi S."/>
            <person name="Nishikawa S."/>
            <person name="Nori F."/>
            <person name="Ohara O."/>
            <person name="Okazaki Y."/>
            <person name="Orlando V."/>
            <person name="Pang K.C."/>
            <person name="Pavan W.J."/>
            <person name="Pavesi G."/>
            <person name="Pesole G."/>
            <person name="Petrovsky N."/>
            <person name="Piazza S."/>
            <person name="Reed J."/>
            <person name="Reid J.F."/>
            <person name="Ring B.Z."/>
            <person name="Ringwald M."/>
            <person name="Rost B."/>
            <person name="Ruan Y."/>
            <person name="Salzberg S.L."/>
            <person name="Sandelin A."/>
            <person name="Schneider C."/>
            <person name="Schoenbach C."/>
            <person name="Sekiguchi K."/>
            <person name="Semple C.A."/>
            <person name="Seno S."/>
            <person name="Sessa L."/>
            <person name="Sheng Y."/>
            <person name="Shibata Y."/>
            <person name="Shimada H."/>
            <person name="Shimada K."/>
            <person name="Silva D."/>
            <person name="Sinclair B."/>
            <person name="Sperling S."/>
            <person name="Stupka E."/>
            <person name="Sugiura K."/>
            <person name="Sultana R."/>
            <person name="Takenaka Y."/>
            <person name="Taki K."/>
            <person name="Tammoja K."/>
            <person name="Tan S.L."/>
            <person name="Tang S."/>
            <person name="Taylor M.S."/>
            <person name="Tegner J."/>
            <person name="Teichmann S.A."/>
            <person name="Ueda H.R."/>
            <person name="van Nimwegen E."/>
            <person name="Verardo R."/>
            <person name="Wei C.L."/>
            <person name="Yagi K."/>
            <person name="Yamanishi H."/>
            <person name="Zabarovsky E."/>
            <person name="Zhu S."/>
            <person name="Zimmer A."/>
            <person name="Hide W."/>
            <person name="Bult C."/>
            <person name="Grimmond S.M."/>
            <person name="Teasdale R.D."/>
            <person name="Liu E.T."/>
            <person name="Brusic V."/>
            <person name="Quackenbush J."/>
            <person name="Wahlestedt C."/>
            <person name="Mattick J.S."/>
            <person name="Hume D.A."/>
            <person name="Kai C."/>
            <person name="Sasaki D."/>
            <person name="Tomaru Y."/>
            <person name="Fukuda S."/>
            <person name="Kanamori-Katayama M."/>
            <person name="Suzuki M."/>
            <person name="Aoki J."/>
            <person name="Arakawa T."/>
            <person name="Iida J."/>
            <person name="Imamura K."/>
            <person name="Itoh M."/>
            <person name="Kato T."/>
            <person name="Kawaji H."/>
            <person name="Kawagashira N."/>
            <person name="Kawashima T."/>
            <person name="Kojima M."/>
            <person name="Kondo S."/>
            <person name="Konno H."/>
            <person name="Nakano K."/>
            <person name="Ninomiya N."/>
            <person name="Nishio T."/>
            <person name="Okada M."/>
            <person name="Plessy C."/>
            <person name="Shibata K."/>
            <person name="Shiraki T."/>
            <person name="Suzuki S."/>
            <person name="Tagami M."/>
            <person name="Waki K."/>
            <person name="Watahiki A."/>
            <person name="Okamura-Oho Y."/>
            <person name="Suzuki H."/>
            <person name="Kawai J."/>
            <person name="Hayashizaki Y."/>
        </authorList>
    </citation>
    <scope>NUCLEOTIDE SEQUENCE [LARGE SCALE MRNA]</scope>
    <source>
        <strain>C57BL/6J</strain>
        <tissue>Aorta</tissue>
        <tissue>Bone</tissue>
        <tissue>Lung</tissue>
        <tissue>Skin</tissue>
    </source>
</reference>
<reference key="2">
    <citation type="journal article" date="2004" name="Genome Res.">
        <title>The status, quality, and expansion of the NIH full-length cDNA project: the Mammalian Gene Collection (MGC).</title>
        <authorList>
            <consortium name="The MGC Project Team"/>
        </authorList>
    </citation>
    <scope>NUCLEOTIDE SEQUENCE [LARGE SCALE MRNA]</scope>
    <source>
        <strain>C57BL/6J</strain>
        <tissue>Brain</tissue>
    </source>
</reference>
<reference key="3">
    <citation type="journal article" date="2010" name="Cell">
        <title>A tissue-specific atlas of mouse protein phosphorylation and expression.</title>
        <authorList>
            <person name="Huttlin E.L."/>
            <person name="Jedrychowski M.P."/>
            <person name="Elias J.E."/>
            <person name="Goswami T."/>
            <person name="Rad R."/>
            <person name="Beausoleil S.A."/>
            <person name="Villen J."/>
            <person name="Haas W."/>
            <person name="Sowa M.E."/>
            <person name="Gygi S.P."/>
        </authorList>
    </citation>
    <scope>IDENTIFICATION BY MASS SPECTROMETRY [LARGE SCALE ANALYSIS]</scope>
    <source>
        <tissue>Brain</tissue>
        <tissue>Kidney</tissue>
        <tissue>Pancreas</tissue>
    </source>
</reference>
<protein>
    <recommendedName>
        <fullName>ELMO domain-containing protein 2</fullName>
    </recommendedName>
</protein>
<gene>
    <name type="primary">Elmod2</name>
</gene>
<name>ELMD2_MOUSE</name>
<dbReference type="EMBL" id="AK029044">
    <property type="protein sequence ID" value="BAC26262.1"/>
    <property type="molecule type" value="mRNA"/>
</dbReference>
<dbReference type="EMBL" id="AK036746">
    <property type="protein sequence ID" value="BAC29561.1"/>
    <property type="molecule type" value="mRNA"/>
</dbReference>
<dbReference type="EMBL" id="AK041137">
    <property type="protein sequence ID" value="BAC30834.1"/>
    <property type="molecule type" value="mRNA"/>
</dbReference>
<dbReference type="EMBL" id="AK084950">
    <property type="protein sequence ID" value="BAC39319.1"/>
    <property type="molecule type" value="mRNA"/>
</dbReference>
<dbReference type="EMBL" id="BC079654">
    <property type="protein sequence ID" value="AAH79654.1"/>
    <property type="molecule type" value="mRNA"/>
</dbReference>
<dbReference type="CCDS" id="CCDS22450.1"/>
<dbReference type="RefSeq" id="NP_001164162.1">
    <property type="nucleotide sequence ID" value="NM_001170691.1"/>
</dbReference>
<dbReference type="RefSeq" id="NP_848851.3">
    <property type="nucleotide sequence ID" value="NM_178736.5"/>
</dbReference>
<dbReference type="RefSeq" id="XP_006531042.1">
    <property type="nucleotide sequence ID" value="XM_006530979.4"/>
</dbReference>
<dbReference type="RefSeq" id="XP_036009926.1">
    <property type="nucleotide sequence ID" value="XM_036154033.1"/>
</dbReference>
<dbReference type="SMR" id="Q8BGF6"/>
<dbReference type="BioGRID" id="232658">
    <property type="interactions" value="1"/>
</dbReference>
<dbReference type="FunCoup" id="Q8BGF6">
    <property type="interactions" value="2744"/>
</dbReference>
<dbReference type="STRING" id="10090.ENSMUSP00000137044"/>
<dbReference type="iPTMnet" id="Q8BGF6"/>
<dbReference type="PhosphoSitePlus" id="Q8BGF6"/>
<dbReference type="SwissPalm" id="Q8BGF6"/>
<dbReference type="PaxDb" id="10090-ENSMUSP00000052287"/>
<dbReference type="PeptideAtlas" id="Q8BGF6"/>
<dbReference type="ProteomicsDB" id="277783"/>
<dbReference type="Pumba" id="Q8BGF6"/>
<dbReference type="Antibodypedia" id="45421">
    <property type="antibodies" value="157 antibodies from 23 providers"/>
</dbReference>
<dbReference type="Ensembl" id="ENSMUST00000053902.4">
    <property type="protein sequence ID" value="ENSMUSP00000052287.4"/>
    <property type="gene ID" value="ENSMUSG00000035151.13"/>
</dbReference>
<dbReference type="Ensembl" id="ENSMUST00000177594.8">
    <property type="protein sequence ID" value="ENSMUSP00000137044.2"/>
    <property type="gene ID" value="ENSMUSG00000035151.13"/>
</dbReference>
<dbReference type="GeneID" id="244548"/>
<dbReference type="KEGG" id="mmu:244548"/>
<dbReference type="UCSC" id="uc009mjz.2">
    <property type="organism name" value="mouse"/>
</dbReference>
<dbReference type="AGR" id="MGI:2445165"/>
<dbReference type="CTD" id="255520"/>
<dbReference type="MGI" id="MGI:2445165">
    <property type="gene designation" value="Elmod2"/>
</dbReference>
<dbReference type="VEuPathDB" id="HostDB:ENSMUSG00000035151"/>
<dbReference type="eggNOG" id="KOG2998">
    <property type="taxonomic scope" value="Eukaryota"/>
</dbReference>
<dbReference type="GeneTree" id="ENSGT00940000156589"/>
<dbReference type="HOGENOM" id="CLU_056289_0_0_1"/>
<dbReference type="InParanoid" id="Q8BGF6"/>
<dbReference type="OMA" id="WMKWILR"/>
<dbReference type="OrthoDB" id="67155at2759"/>
<dbReference type="PhylomeDB" id="Q8BGF6"/>
<dbReference type="TreeFam" id="TF323472"/>
<dbReference type="BioGRID-ORCS" id="244548">
    <property type="hits" value="1 hit in 76 CRISPR screens"/>
</dbReference>
<dbReference type="ChiTaRS" id="Elmod2">
    <property type="organism name" value="mouse"/>
</dbReference>
<dbReference type="PRO" id="PR:Q8BGF6"/>
<dbReference type="Proteomes" id="UP000000589">
    <property type="component" value="Chromosome 8"/>
</dbReference>
<dbReference type="RNAct" id="Q8BGF6">
    <property type="molecule type" value="protein"/>
</dbReference>
<dbReference type="Bgee" id="ENSMUSG00000035151">
    <property type="expression patterns" value="Expressed in primary oocyte and 230 other cell types or tissues"/>
</dbReference>
<dbReference type="ExpressionAtlas" id="Q8BGF6">
    <property type="expression patterns" value="baseline and differential"/>
</dbReference>
<dbReference type="GO" id="GO:0005096">
    <property type="term" value="F:GTPase activator activity"/>
    <property type="evidence" value="ECO:0000250"/>
    <property type="project" value="UniProtKB"/>
</dbReference>
<dbReference type="GO" id="GO:0050688">
    <property type="term" value="P:regulation of defense response to virus"/>
    <property type="evidence" value="ECO:0000250"/>
    <property type="project" value="UniProtKB"/>
</dbReference>
<dbReference type="InterPro" id="IPR006816">
    <property type="entry name" value="ELMO_dom"/>
</dbReference>
<dbReference type="InterPro" id="IPR050868">
    <property type="entry name" value="ELMO_domain-containing"/>
</dbReference>
<dbReference type="PANTHER" id="PTHR12771:SF47">
    <property type="entry name" value="ELMO DOMAIN-CONTAINING PROTEIN 2"/>
    <property type="match status" value="1"/>
</dbReference>
<dbReference type="PANTHER" id="PTHR12771">
    <property type="entry name" value="ENGULFMENT AND CELL MOTILITY"/>
    <property type="match status" value="1"/>
</dbReference>
<dbReference type="Pfam" id="PF04727">
    <property type="entry name" value="ELMO_CED12"/>
    <property type="match status" value="1"/>
</dbReference>
<dbReference type="PROSITE" id="PS51335">
    <property type="entry name" value="ELMO"/>
    <property type="match status" value="1"/>
</dbReference>
<sequence length="293" mass="34747">MFVSLWEFFYGHFFRFWMKWLLRQMTGKCELQRIFDTYGGAQRTYRIENSLTYSKNKVLQNATRVAQSELDRCIANIMKEKNICSEKDTSFQICMRTCLLQITGYKQLYHDVENVRKKPYDSANAQHEKMLLKLWSLLMPTKKLTARISKQWADIGFQGDDPKTDFRGMGILGLINLVYFSENYTSEAHQILSRSNHPKLGYSYAIVGINLTEMAYSLLKSEALKLHLYNFVPGVPTMEHFHQFYCYLVYEFDKFWLEEEPESIMYFNLYREKFHERIKGLLMDCNAVLTLKT</sequence>
<evidence type="ECO:0000255" key="1">
    <source>
        <dbReference type="PROSITE-ProRule" id="PRU00664"/>
    </source>
</evidence>
<evidence type="ECO:0000305" key="2"/>
<feature type="chain" id="PRO_0000225018" description="ELMO domain-containing protein 2">
    <location>
        <begin position="1"/>
        <end position="293"/>
    </location>
</feature>
<feature type="domain" description="ELMO" evidence="1">
    <location>
        <begin position="126"/>
        <end position="282"/>
    </location>
</feature>
<feature type="sequence conflict" description="In Ref. 2; AAH79654." evidence="2" ref="2">
    <original>I</original>
    <variation>T</variation>
    <location>
        <position position="47"/>
    </location>
</feature>
<feature type="sequence conflict" description="In Ref. 1; BAC29561." evidence="2" ref="1">
    <original>E</original>
    <variation>G</variation>
    <location>
        <position position="222"/>
    </location>
</feature>
<proteinExistence type="evidence at protein level"/>
<organism>
    <name type="scientific">Mus musculus</name>
    <name type="common">Mouse</name>
    <dbReference type="NCBI Taxonomy" id="10090"/>
    <lineage>
        <taxon>Eukaryota</taxon>
        <taxon>Metazoa</taxon>
        <taxon>Chordata</taxon>
        <taxon>Craniata</taxon>
        <taxon>Vertebrata</taxon>
        <taxon>Euteleostomi</taxon>
        <taxon>Mammalia</taxon>
        <taxon>Eutheria</taxon>
        <taxon>Euarchontoglires</taxon>
        <taxon>Glires</taxon>
        <taxon>Rodentia</taxon>
        <taxon>Myomorpha</taxon>
        <taxon>Muroidea</taxon>
        <taxon>Muridae</taxon>
        <taxon>Murinae</taxon>
        <taxon>Mus</taxon>
        <taxon>Mus</taxon>
    </lineage>
</organism>
<keyword id="KW-0343">GTPase activation</keyword>
<keyword id="KW-1185">Reference proteome</keyword>
<comment type="function">
    <text>Acts as a GTPase-activating protein (GAP) toward guanine nucleotide exchange factors like ARL2, ARL3, ARF1 and ARF6, but not for GTPases outside the Arf family.</text>
</comment>